<proteinExistence type="inferred from homology"/>
<comment type="function">
    <text evidence="1">Protein S19 forms a complex with S13 that binds strongly to the 16S ribosomal RNA.</text>
</comment>
<comment type="similarity">
    <text evidence="2">Belongs to the universal ribosomal protein uS19 family.</text>
</comment>
<organism>
    <name type="scientific">Pasteurella multocida (strain Pm70)</name>
    <dbReference type="NCBI Taxonomy" id="272843"/>
    <lineage>
        <taxon>Bacteria</taxon>
        <taxon>Pseudomonadati</taxon>
        <taxon>Pseudomonadota</taxon>
        <taxon>Gammaproteobacteria</taxon>
        <taxon>Pasteurellales</taxon>
        <taxon>Pasteurellaceae</taxon>
        <taxon>Pasteurella</taxon>
    </lineage>
</organism>
<evidence type="ECO:0000250" key="1"/>
<evidence type="ECO:0000305" key="2"/>
<name>RS19_PASMU</name>
<dbReference type="EMBL" id="AE004439">
    <property type="protein sequence ID" value="AAK03495.1"/>
    <property type="molecule type" value="Genomic_DNA"/>
</dbReference>
<dbReference type="RefSeq" id="WP_005539416.1">
    <property type="nucleotide sequence ID" value="NC_002663.1"/>
</dbReference>
<dbReference type="SMR" id="P67900"/>
<dbReference type="STRING" id="272843.PM1411"/>
<dbReference type="DNASU" id="1244758"/>
<dbReference type="EnsemblBacteria" id="AAK03495">
    <property type="protein sequence ID" value="AAK03495"/>
    <property type="gene ID" value="PM1411"/>
</dbReference>
<dbReference type="GeneID" id="93298793"/>
<dbReference type="KEGG" id="pmu:PM1411"/>
<dbReference type="HOGENOM" id="CLU_144911_0_1_6"/>
<dbReference type="OrthoDB" id="9797833at2"/>
<dbReference type="Proteomes" id="UP000000809">
    <property type="component" value="Chromosome"/>
</dbReference>
<dbReference type="GO" id="GO:0005737">
    <property type="term" value="C:cytoplasm"/>
    <property type="evidence" value="ECO:0007669"/>
    <property type="project" value="UniProtKB-ARBA"/>
</dbReference>
<dbReference type="GO" id="GO:0015935">
    <property type="term" value="C:small ribosomal subunit"/>
    <property type="evidence" value="ECO:0007669"/>
    <property type="project" value="InterPro"/>
</dbReference>
<dbReference type="GO" id="GO:0019843">
    <property type="term" value="F:rRNA binding"/>
    <property type="evidence" value="ECO:0007669"/>
    <property type="project" value="UniProtKB-UniRule"/>
</dbReference>
<dbReference type="GO" id="GO:0003735">
    <property type="term" value="F:structural constituent of ribosome"/>
    <property type="evidence" value="ECO:0007669"/>
    <property type="project" value="InterPro"/>
</dbReference>
<dbReference type="GO" id="GO:0000028">
    <property type="term" value="P:ribosomal small subunit assembly"/>
    <property type="evidence" value="ECO:0007669"/>
    <property type="project" value="TreeGrafter"/>
</dbReference>
<dbReference type="GO" id="GO:0006412">
    <property type="term" value="P:translation"/>
    <property type="evidence" value="ECO:0007669"/>
    <property type="project" value="UniProtKB-UniRule"/>
</dbReference>
<dbReference type="FunFam" id="3.30.860.10:FF:000001">
    <property type="entry name" value="30S ribosomal protein S19"/>
    <property type="match status" value="1"/>
</dbReference>
<dbReference type="Gene3D" id="3.30.860.10">
    <property type="entry name" value="30s Ribosomal Protein S19, Chain A"/>
    <property type="match status" value="1"/>
</dbReference>
<dbReference type="HAMAP" id="MF_00531">
    <property type="entry name" value="Ribosomal_uS19"/>
    <property type="match status" value="1"/>
</dbReference>
<dbReference type="InterPro" id="IPR002222">
    <property type="entry name" value="Ribosomal_uS19"/>
</dbReference>
<dbReference type="InterPro" id="IPR005732">
    <property type="entry name" value="Ribosomal_uS19_bac-type"/>
</dbReference>
<dbReference type="InterPro" id="IPR020934">
    <property type="entry name" value="Ribosomal_uS19_CS"/>
</dbReference>
<dbReference type="InterPro" id="IPR023575">
    <property type="entry name" value="Ribosomal_uS19_SF"/>
</dbReference>
<dbReference type="NCBIfam" id="TIGR01050">
    <property type="entry name" value="rpsS_bact"/>
    <property type="match status" value="1"/>
</dbReference>
<dbReference type="PANTHER" id="PTHR11880">
    <property type="entry name" value="RIBOSOMAL PROTEIN S19P FAMILY MEMBER"/>
    <property type="match status" value="1"/>
</dbReference>
<dbReference type="PANTHER" id="PTHR11880:SF8">
    <property type="entry name" value="SMALL RIBOSOMAL SUBUNIT PROTEIN US19M"/>
    <property type="match status" value="1"/>
</dbReference>
<dbReference type="Pfam" id="PF00203">
    <property type="entry name" value="Ribosomal_S19"/>
    <property type="match status" value="1"/>
</dbReference>
<dbReference type="PIRSF" id="PIRSF002144">
    <property type="entry name" value="Ribosomal_S19"/>
    <property type="match status" value="1"/>
</dbReference>
<dbReference type="PRINTS" id="PR00975">
    <property type="entry name" value="RIBOSOMALS19"/>
</dbReference>
<dbReference type="SUPFAM" id="SSF54570">
    <property type="entry name" value="Ribosomal protein S19"/>
    <property type="match status" value="1"/>
</dbReference>
<dbReference type="PROSITE" id="PS00323">
    <property type="entry name" value="RIBOSOMAL_S19"/>
    <property type="match status" value="1"/>
</dbReference>
<keyword id="KW-1185">Reference proteome</keyword>
<keyword id="KW-0687">Ribonucleoprotein</keyword>
<keyword id="KW-0689">Ribosomal protein</keyword>
<keyword id="KW-0694">RNA-binding</keyword>
<keyword id="KW-0699">rRNA-binding</keyword>
<sequence length="91" mass="10259">MPRSLKKGPFLDLHLLKKVEKAVESGDKKPIKTWSRRSMIIPSMIGLTIAVHNGRQHVPVYVSDEMIGHKLGEFAPTRTYRGHAADKKAKK</sequence>
<gene>
    <name type="primary">rpsS</name>
    <name type="synonym">rps19</name>
    <name type="ordered locus">PM1411</name>
</gene>
<reference key="1">
    <citation type="journal article" date="2001" name="Proc. Natl. Acad. Sci. U.S.A.">
        <title>Complete genomic sequence of Pasteurella multocida Pm70.</title>
        <authorList>
            <person name="May B.J."/>
            <person name="Zhang Q."/>
            <person name="Li L.L."/>
            <person name="Paustian M.L."/>
            <person name="Whittam T.S."/>
            <person name="Kapur V."/>
        </authorList>
    </citation>
    <scope>NUCLEOTIDE SEQUENCE [LARGE SCALE GENOMIC DNA]</scope>
    <source>
        <strain>Pm70</strain>
    </source>
</reference>
<protein>
    <recommendedName>
        <fullName evidence="2">Small ribosomal subunit protein uS19</fullName>
    </recommendedName>
    <alternativeName>
        <fullName>30S ribosomal protein S19</fullName>
    </alternativeName>
</protein>
<feature type="initiator methionine" description="Removed" evidence="1">
    <location>
        <position position="1"/>
    </location>
</feature>
<feature type="chain" id="PRO_0000129871" description="Small ribosomal subunit protein uS19">
    <location>
        <begin position="2"/>
        <end position="91"/>
    </location>
</feature>
<accession>P67900</accession>
<accession>P44385</accession>